<dbReference type="EMBL" id="AF539700">
    <property type="protein sequence ID" value="AAN16381.1"/>
    <property type="molecule type" value="mRNA"/>
</dbReference>
<dbReference type="SMR" id="Q8J254"/>
<dbReference type="BRENDA" id="4.2.2.2">
    <property type="organism ID" value="1569"/>
</dbReference>
<dbReference type="GO" id="GO:0005634">
    <property type="term" value="C:nucleus"/>
    <property type="evidence" value="ECO:0007669"/>
    <property type="project" value="UniProtKB-SubCell"/>
</dbReference>
<dbReference type="GO" id="GO:0003677">
    <property type="term" value="F:DNA binding"/>
    <property type="evidence" value="ECO:0007669"/>
    <property type="project" value="UniProtKB-KW"/>
</dbReference>
<dbReference type="GO" id="GO:0008270">
    <property type="term" value="F:zinc ion binding"/>
    <property type="evidence" value="ECO:0007669"/>
    <property type="project" value="UniProtKB-KW"/>
</dbReference>
<dbReference type="GO" id="GO:0045944">
    <property type="term" value="P:positive regulation of transcription by RNA polymerase II"/>
    <property type="evidence" value="ECO:0007669"/>
    <property type="project" value="TreeGrafter"/>
</dbReference>
<dbReference type="FunFam" id="3.30.160.60:FF:002343">
    <property type="entry name" value="Zinc finger protein 33A"/>
    <property type="match status" value="1"/>
</dbReference>
<dbReference type="Gene3D" id="3.30.160.60">
    <property type="entry name" value="Classic Zinc Finger"/>
    <property type="match status" value="1"/>
</dbReference>
<dbReference type="InterPro" id="IPR050806">
    <property type="entry name" value="pacC/RIM101"/>
</dbReference>
<dbReference type="InterPro" id="IPR036236">
    <property type="entry name" value="Znf_C2H2_sf"/>
</dbReference>
<dbReference type="InterPro" id="IPR013087">
    <property type="entry name" value="Znf_C2H2_type"/>
</dbReference>
<dbReference type="PANTHER" id="PTHR47257">
    <property type="entry name" value="PH-RESPONSE TRANSCRIPTION FACTOR PACC/RIM101"/>
    <property type="match status" value="1"/>
</dbReference>
<dbReference type="PANTHER" id="PTHR47257:SF1">
    <property type="entry name" value="PH-RESPONSE TRANSCRIPTION FACTOR PACC_RIM101"/>
    <property type="match status" value="1"/>
</dbReference>
<dbReference type="Pfam" id="PF00096">
    <property type="entry name" value="zf-C2H2"/>
    <property type="match status" value="1"/>
</dbReference>
<dbReference type="SMART" id="SM00355">
    <property type="entry name" value="ZnF_C2H2"/>
    <property type="match status" value="2"/>
</dbReference>
<dbReference type="SUPFAM" id="SSF57667">
    <property type="entry name" value="beta-beta-alpha zinc fingers"/>
    <property type="match status" value="1"/>
</dbReference>
<dbReference type="PROSITE" id="PS50157">
    <property type="entry name" value="ZINC_FINGER_C2H2_2"/>
    <property type="match status" value="2"/>
</dbReference>
<proteinExistence type="evidence at transcript level"/>
<comment type="function">
    <text evidence="1">Transcription factor that mediates regulation of both acid- and alkaline-expressed genes in response to ambient pH. At alkaline ambient pH, activates transcription of alkaline-expressed genes (including pac1 itself) and represses transcription of acid-expressed genes (By similarity).</text>
</comment>
<comment type="subcellular location">
    <subcellularLocation>
        <location evidence="4">Nucleus</location>
    </subcellularLocation>
</comment>
<comment type="induction">
    <text evidence="3">By alkaline conditions.</text>
</comment>
<comment type="similarity">
    <text evidence="4">Belongs to the pacC/RIM101 family.</text>
</comment>
<organism>
    <name type="scientific">Colletotrichum gloeosporioides</name>
    <name type="common">Anthracnose fungus</name>
    <name type="synonym">Glomerella cingulata</name>
    <dbReference type="NCBI Taxonomy" id="474922"/>
    <lineage>
        <taxon>Eukaryota</taxon>
        <taxon>Fungi</taxon>
        <taxon>Dikarya</taxon>
        <taxon>Ascomycota</taxon>
        <taxon>Pezizomycotina</taxon>
        <taxon>Sordariomycetes</taxon>
        <taxon>Hypocreomycetidae</taxon>
        <taxon>Glomerellales</taxon>
        <taxon>Glomerellaceae</taxon>
        <taxon>Colletotrichum</taxon>
        <taxon>Colletotrichum gloeosporioides species complex</taxon>
    </lineage>
</organism>
<evidence type="ECO:0000250" key="1"/>
<evidence type="ECO:0000255" key="2">
    <source>
        <dbReference type="PROSITE-ProRule" id="PRU00042"/>
    </source>
</evidence>
<evidence type="ECO:0000269" key="3">
    <source>
    </source>
</evidence>
<evidence type="ECO:0000305" key="4"/>
<reference key="1">
    <citation type="journal article" date="2003" name="Appl. Environ. Microbiol.">
        <title>External pH and nitrogen source affect secretion of pectate lyase by Colletotrichum gloeosporioides.</title>
        <authorList>
            <person name="Drori N."/>
            <person name="Kramer-Haimovich H."/>
            <person name="Rollins J.A."/>
            <person name="Dinoor A."/>
            <person name="Okon Y."/>
            <person name="Pines O."/>
            <person name="Prusky D."/>
        </authorList>
    </citation>
    <scope>NUCLEOTIDE SEQUENCE [GENOMIC DNA / MRNA]</scope>
    <scope>INDUCTION</scope>
    <source>
        <strain>CG-14</strain>
    </source>
</reference>
<accession>Q8J254</accession>
<name>PACC_COLGL</name>
<protein>
    <recommendedName>
        <fullName>pH-response transcription factor pacC/RIM101</fullName>
    </recommendedName>
</protein>
<sequence length="65" mass="7635">VCERHVGRKSTNNLNLTCQWNSCRTTTVKRDHITSHIRVHVPLKPHKCEFCGKSFKRPQDLKKHV</sequence>
<keyword id="KW-0010">Activator</keyword>
<keyword id="KW-0238">DNA-binding</keyword>
<keyword id="KW-0479">Metal-binding</keyword>
<keyword id="KW-0539">Nucleus</keyword>
<keyword id="KW-0677">Repeat</keyword>
<keyword id="KW-0678">Repressor</keyword>
<keyword id="KW-0804">Transcription</keyword>
<keyword id="KW-0805">Transcription regulation</keyword>
<keyword id="KW-0862">Zinc</keyword>
<keyword id="KW-0863">Zinc-finger</keyword>
<gene>
    <name type="primary">pac1</name>
</gene>
<feature type="chain" id="PRO_0000046828" description="pH-response transcription factor pacC/RIM101">
    <location>
        <begin position="1" status="less than"/>
        <end position="65" status="greater than"/>
    </location>
</feature>
<feature type="zinc finger region" description="C2H2-type 1" evidence="2">
    <location>
        <begin position="16"/>
        <end position="40"/>
    </location>
</feature>
<feature type="zinc finger region" description="C2H2-type 2; degenerate" evidence="2">
    <location>
        <begin position="46"/>
        <end position="65" status="greater than"/>
    </location>
</feature>
<feature type="non-terminal residue">
    <location>
        <position position="1"/>
    </location>
</feature>
<feature type="non-terminal residue">
    <location>
        <position position="65"/>
    </location>
</feature>